<name>SF01_HUMAN</name>
<protein>
    <recommendedName>
        <fullName>Splicing factor 1</fullName>
    </recommendedName>
    <alternativeName>
        <fullName>Mammalian branch point-binding protein</fullName>
        <shortName>BBP</shortName>
        <shortName>mBBP</shortName>
    </alternativeName>
    <alternativeName>
        <fullName>Transcription factor ZFM1</fullName>
    </alternativeName>
    <alternativeName>
        <fullName>Zinc finger gene in MEN1 locus</fullName>
    </alternativeName>
    <alternativeName>
        <fullName>Zinc finger protein 162</fullName>
    </alternativeName>
</protein>
<feature type="initiator methionine" description="Removed" evidence="13 23 27 28">
    <location>
        <position position="1"/>
    </location>
</feature>
<feature type="chain" id="PRO_0000050129" description="Splicing factor 1">
    <location>
        <begin position="2"/>
        <end position="639"/>
    </location>
</feature>
<feature type="domain" description="KH" evidence="3">
    <location>
        <begin position="141"/>
        <end position="222"/>
    </location>
</feature>
<feature type="zinc finger region" description="CCHC-type" evidence="2">
    <location>
        <begin position="277"/>
        <end position="296"/>
    </location>
</feature>
<feature type="region of interest" description="Disordered" evidence="4">
    <location>
        <begin position="1"/>
        <end position="42"/>
    </location>
</feature>
<feature type="region of interest" description="Disordered" evidence="4">
    <location>
        <begin position="65"/>
        <end position="94"/>
    </location>
</feature>
<feature type="region of interest" description="Disordered" evidence="4">
    <location>
        <begin position="325"/>
        <end position="639"/>
    </location>
</feature>
<feature type="short sequence motif" description="Nuclear localization signal" evidence="1">
    <location>
        <begin position="15"/>
        <end position="19"/>
    </location>
</feature>
<feature type="compositionally biased region" description="Low complexity" evidence="4">
    <location>
        <begin position="335"/>
        <end position="350"/>
    </location>
</feature>
<feature type="compositionally biased region" description="Gly residues" evidence="4">
    <location>
        <begin position="382"/>
        <end position="394"/>
    </location>
</feature>
<feature type="compositionally biased region" description="Pro residues" evidence="4">
    <location>
        <begin position="418"/>
        <end position="447"/>
    </location>
</feature>
<feature type="compositionally biased region" description="Pro residues" evidence="4">
    <location>
        <begin position="470"/>
        <end position="499"/>
    </location>
</feature>
<feature type="compositionally biased region" description="Low complexity" evidence="4">
    <location>
        <begin position="515"/>
        <end position="534"/>
    </location>
</feature>
<feature type="compositionally biased region" description="Low complexity" evidence="4">
    <location>
        <begin position="542"/>
        <end position="566"/>
    </location>
</feature>
<feature type="compositionally biased region" description="Pro residues" evidence="4">
    <location>
        <begin position="567"/>
        <end position="591"/>
    </location>
</feature>
<feature type="compositionally biased region" description="Pro residues" evidence="4">
    <location>
        <begin position="598"/>
        <end position="608"/>
    </location>
</feature>
<feature type="compositionally biased region" description="Low complexity" evidence="4">
    <location>
        <begin position="615"/>
        <end position="625"/>
    </location>
</feature>
<feature type="compositionally biased region" description="Pro residues" evidence="4">
    <location>
        <begin position="626"/>
        <end position="639"/>
    </location>
</feature>
<feature type="modified residue" description="N-acetylalanine" evidence="13 23 27 28">
    <location>
        <position position="2"/>
    </location>
</feature>
<feature type="modified residue" description="Phosphoserine" evidence="29">
    <location>
        <position position="14"/>
    </location>
</feature>
<feature type="modified residue" description="Phosphoserine; by PKG" evidence="5">
    <location>
        <position position="20"/>
    </location>
</feature>
<feature type="modified residue" description="Phosphoserine" evidence="22 24 25 26 29">
    <location>
        <position position="80"/>
    </location>
</feature>
<feature type="modified residue" description="Phosphoserine" evidence="22 24 25 26 29">
    <location>
        <position position="82"/>
    </location>
</feature>
<feature type="modified residue" description="Phosphotyrosine" evidence="31">
    <location>
        <position position="87"/>
    </location>
</feature>
<feature type="modified residue" description="Phosphoserine" evidence="31">
    <location>
        <position position="89"/>
    </location>
</feature>
<feature type="splice variant" id="VSP_045274" description="In isoform 7." evidence="14">
    <location>
        <begin position="1"/>
        <end position="26"/>
    </location>
</feature>
<feature type="splice variant" id="VSP_008833" description="In isoform 5." evidence="15">
    <original>L</original>
    <variation>LGKLGPPGLPPLPGPKGGFEPGPPPAPGPGAGLLAPGPPPPPPVGSMGALTAAFPFAALPPPPPPPPPPPPQQPPPPPPPPSPGASYPPPQPPPPPPLYQRVSPPQPPPPQPPRKDQQPGPAGGGG</variation>
    <location>
        <position position="10"/>
    </location>
</feature>
<feature type="splice variant" id="VSP_008834" description="In isoform 6." evidence="18">
    <original>DQYLGSTPVGSGVYRLHQGKGMMPPPPMGMMPPPPPPPSGQPPPPPSGPLPPWQQQQQQPPPPPPPSSSMASSTPLPWQQNTTTTTTSAGTGSIPPWQQQQ</original>
    <variation>GKSVPGKYACGLWGLSPASRKRYDAATTYGHDA</variation>
    <location>
        <begin position="448"/>
        <end position="548"/>
    </location>
</feature>
<feature type="splice variant" id="VSP_008835" description="In isoform 4 and isoform 5." evidence="15 16">
    <original>NTTTTTTSAGTGSIPPWQQQQ</original>
    <variation>RSLPAAAMARAMRVRTFRAHW</variation>
    <location>
        <begin position="528"/>
        <end position="548"/>
    </location>
</feature>
<feature type="splice variant" id="VSP_008836" description="In isoform 4 and isoform 5." evidence="15 16">
    <location>
        <begin position="549"/>
        <end position="639"/>
    </location>
</feature>
<feature type="splice variant" id="VSP_008837" description="In isoform 6." evidence="18">
    <original>PGAPQMQGNPTMVPLPPGVQPPLPPGAPPPPPPPPPGSAGMMYAPPPPPPPPMDPSNFVTMMGMGVAGMPPFGMPPAPPPPPPQN</original>
    <variation>QWAAPTPSLWSSSPMATTAAAASATPSAQQQYGFQYPLAMAAKIPPRGGDGPSHESEDFPRPLVTLPGRQPQQRPWWTGWFGKAA</variation>
    <location>
        <begin position="555"/>
        <end position="639"/>
    </location>
</feature>
<feature type="splice variant" id="VSP_008838" description="In isoform 3." evidence="16">
    <original>PPPPGSAGMMYAPPPPPPPPMDPSNFVTMMGMGVAGMPPFGMPPAPPPPPPQN</original>
    <variation>RSIECLLCLLSLLTQLPLPLPKPGRQDPSPRRRWPEP</variation>
    <location>
        <begin position="587"/>
        <end position="639"/>
    </location>
</feature>
<feature type="splice variant" id="VSP_008839" description="In isoform 2." evidence="17">
    <original>YAPPPPPPPPMDPSNFVTMMGMGVAGMPPFGMPPAPPPPPPQN</original>
    <variation>IPPRGGDGPSHESEDFPRPLVTLPGRQPQQRPWWTGWFGKAA</variation>
    <location>
        <begin position="597"/>
        <end position="639"/>
    </location>
</feature>
<feature type="sequence variant" id="VAR_017196" evidence="11">
    <original>S</original>
    <variation>T</variation>
    <location>
        <position position="357"/>
    </location>
</feature>
<feature type="mutagenesis site" description="Abolishes interaction with U2AF2.">
    <original>KKR</original>
    <variation>EED</variation>
    <location>
        <begin position="15"/>
        <end position="17"/>
    </location>
</feature>
<feature type="mutagenesis site" description="Abolishes interaction with U2AF2." evidence="8">
    <original>KRK</original>
    <variation>EDE</variation>
    <location>
        <begin position="16"/>
        <end position="18"/>
    </location>
</feature>
<feature type="mutagenesis site" description="Strongly decreases interaction with U2AF2 and spliceosome assembly." evidence="5">
    <original>S</original>
    <variation>A</variation>
    <location>
        <position position="20"/>
    </location>
</feature>
<feature type="mutagenesis site" description="Decreases interaction with U2AF2." evidence="5">
    <original>S</original>
    <variation>T</variation>
    <location>
        <position position="20"/>
    </location>
</feature>
<feature type="mutagenesis site" description="Decreases interaction with U2AF2 and spliceosome assembly." evidence="8">
    <original>R</original>
    <variation>A</variation>
    <location>
        <position position="21"/>
    </location>
</feature>
<feature type="mutagenesis site" description="No effect." evidence="8">
    <original>R</original>
    <variation>K</variation>
    <location>
        <position position="21"/>
    </location>
</feature>
<feature type="mutagenesis site" description="Abolishes interaction with U2AF2." evidence="8">
    <original>W</original>
    <variation>A</variation>
    <location>
        <position position="22"/>
    </location>
</feature>
<feature type="mutagenesis site" description="No effect." evidence="8">
    <original>W</original>
    <variation>F</variation>
    <location>
        <position position="22"/>
    </location>
</feature>
<feature type="mutagenesis site" description="Decreases RNA-binding." evidence="6">
    <original>N</original>
    <variation>A</variation>
    <location>
        <position position="151"/>
    </location>
</feature>
<feature type="mutagenesis site" description="Strongly reduces RNA-binding." evidence="6">
    <original>R</original>
    <variation>A</variation>
    <location>
        <position position="160"/>
    </location>
</feature>
<feature type="mutagenesis site" description="Abolishes RNA-binding." evidence="6">
    <original>K</original>
    <variation>A</variation>
    <location>
        <position position="184"/>
    </location>
</feature>
<feature type="mutagenesis site" description="Decreases RNA-binding." evidence="6">
    <original>L</original>
    <variation>A</variation>
    <location>
        <position position="244"/>
    </location>
</feature>
<feature type="mutagenesis site" description="Decreases RNA-binding." evidence="6">
    <original>L</original>
    <variation>A</variation>
    <location>
        <position position="247"/>
    </location>
</feature>
<feature type="mutagenesis site" description="Slightly decreases RNA-binding." evidence="6">
    <original>L</original>
    <variation>A</variation>
    <location>
        <position position="254"/>
    </location>
</feature>
<feature type="mutagenesis site" description="Slightly decreases RNA-binding." evidence="6">
    <original>R</original>
    <variation>A</variation>
    <location>
        <position position="255"/>
    </location>
</feature>
<feature type="sequence conflict" description="In Ref. 3; BAA05116/BAA05117." evidence="19" ref="3">
    <original>E</original>
    <variation>G</variation>
    <location>
        <position position="269"/>
    </location>
</feature>
<feature type="sequence conflict" description="In Ref. 2; AAB03514/AAB04033." evidence="19" ref="2">
    <original>A</original>
    <variation>R</variation>
    <location>
        <position position="348"/>
    </location>
</feature>
<feature type="sequence conflict" description="In Ref. 3; BAA05116/BAA05117." evidence="19" ref="3">
    <original>R</original>
    <variation>W</variation>
    <location>
        <position position="377"/>
    </location>
</feature>
<feature type="sequence conflict" description="In Ref. 4; BAH11587." evidence="19" ref="4">
    <original>P</original>
    <variation>L</variation>
    <location>
        <position position="570"/>
    </location>
</feature>
<feature type="sequence conflict" description="In Ref. 2; AAB04033." evidence="19" ref="2">
    <original>G</original>
    <variation>V</variation>
    <location>
        <position position="591"/>
    </location>
</feature>
<feature type="sequence conflict" description="In Ref. 2; AAB04033." evidence="19" ref="2">
    <original>M</original>
    <variation>I</variation>
    <location>
        <position position="623"/>
    </location>
</feature>
<feature type="strand" evidence="33">
    <location>
        <begin position="15"/>
        <end position="17"/>
    </location>
</feature>
<feature type="helix" evidence="36">
    <location>
        <begin position="27"/>
        <end position="30"/>
    </location>
</feature>
<feature type="helix" evidence="35">
    <location>
        <begin position="46"/>
        <end position="67"/>
    </location>
</feature>
<feature type="helix" evidence="34">
    <location>
        <begin position="76"/>
        <end position="79"/>
    </location>
</feature>
<feature type="strand" evidence="35">
    <location>
        <begin position="93"/>
        <end position="95"/>
    </location>
</feature>
<feature type="helix" evidence="35">
    <location>
        <begin position="97"/>
        <end position="115"/>
    </location>
</feature>
<feature type="helix" evidence="35">
    <location>
        <begin position="116"/>
        <end position="118"/>
    </location>
</feature>
<feature type="strand" evidence="38">
    <location>
        <begin position="136"/>
        <end position="141"/>
    </location>
</feature>
<feature type="turn" evidence="38">
    <location>
        <begin position="144"/>
        <end position="146"/>
    </location>
</feature>
<feature type="helix" evidence="38">
    <location>
        <begin position="152"/>
        <end position="157"/>
    </location>
</feature>
<feature type="helix" evidence="38">
    <location>
        <begin position="159"/>
        <end position="161"/>
    </location>
</feature>
<feature type="helix" evidence="38">
    <location>
        <begin position="162"/>
        <end position="171"/>
    </location>
</feature>
<feature type="strand" evidence="38">
    <location>
        <begin position="173"/>
        <end position="178"/>
    </location>
</feature>
<feature type="strand" evidence="38">
    <location>
        <begin position="204"/>
        <end position="211"/>
    </location>
</feature>
<feature type="helix" evidence="38">
    <location>
        <begin position="212"/>
        <end position="228"/>
    </location>
</feature>
<feature type="helix" evidence="32">
    <location>
        <begin position="238"/>
        <end position="244"/>
    </location>
</feature>
<feature type="helix" evidence="32">
    <location>
        <begin position="245"/>
        <end position="248"/>
    </location>
</feature>
<feature type="turn" evidence="32">
    <location>
        <begin position="249"/>
        <end position="252"/>
    </location>
</feature>
<feature type="helix" evidence="37">
    <location>
        <begin position="305"/>
        <end position="320"/>
    </location>
</feature>
<feature type="modified residue" description="Phosphoserine" evidence="20 21 22">
    <location sequence="Q15637-6">
        <position position="463"/>
    </location>
</feature>
<feature type="modified residue" description="Omega-N-methylarginine" evidence="30">
    <location sequence="Q15637-6">
        <position position="467"/>
    </location>
</feature>
<accession>Q15637</accession>
<accession>B7Z1Q1</accession>
<accession>C9JJE2</accession>
<accession>Q14818</accession>
<accession>Q14819</accession>
<accession>Q15913</accession>
<accession>Q8IY00</accession>
<accession>Q92744</accession>
<accession>Q92745</accession>
<accession>Q969H7</accession>
<accession>Q9BW01</accession>
<accession>Q9UEI0</accession>
<proteinExistence type="evidence at protein level"/>
<evidence type="ECO:0000255" key="1"/>
<evidence type="ECO:0000255" key="2">
    <source>
        <dbReference type="PROSITE-ProRule" id="PRU00047"/>
    </source>
</evidence>
<evidence type="ECO:0000255" key="3">
    <source>
        <dbReference type="PROSITE-ProRule" id="PRU00117"/>
    </source>
</evidence>
<evidence type="ECO:0000256" key="4">
    <source>
        <dbReference type="SAM" id="MobiDB-lite"/>
    </source>
</evidence>
<evidence type="ECO:0000269" key="5">
    <source>
    </source>
</evidence>
<evidence type="ECO:0000269" key="6">
    <source>
    </source>
</evidence>
<evidence type="ECO:0000269" key="7">
    <source>
    </source>
</evidence>
<evidence type="ECO:0000269" key="8">
    <source>
    </source>
</evidence>
<evidence type="ECO:0000269" key="9">
    <source>
    </source>
</evidence>
<evidence type="ECO:0000269" key="10">
    <source>
    </source>
</evidence>
<evidence type="ECO:0000269" key="11">
    <source>
    </source>
</evidence>
<evidence type="ECO:0000269" key="12">
    <source>
    </source>
</evidence>
<evidence type="ECO:0000269" key="13">
    <source ref="8"/>
</evidence>
<evidence type="ECO:0000303" key="14">
    <source>
    </source>
</evidence>
<evidence type="ECO:0000303" key="15">
    <source>
    </source>
</evidence>
<evidence type="ECO:0000303" key="16">
    <source>
    </source>
</evidence>
<evidence type="ECO:0000303" key="17">
    <source>
    </source>
</evidence>
<evidence type="ECO:0000303" key="18">
    <source>
    </source>
</evidence>
<evidence type="ECO:0000305" key="19"/>
<evidence type="ECO:0007744" key="20">
    <source>
    </source>
</evidence>
<evidence type="ECO:0007744" key="21">
    <source>
    </source>
</evidence>
<evidence type="ECO:0007744" key="22">
    <source>
    </source>
</evidence>
<evidence type="ECO:0007744" key="23">
    <source>
    </source>
</evidence>
<evidence type="ECO:0007744" key="24">
    <source>
    </source>
</evidence>
<evidence type="ECO:0007744" key="25">
    <source>
    </source>
</evidence>
<evidence type="ECO:0007744" key="26">
    <source>
    </source>
</evidence>
<evidence type="ECO:0007744" key="27">
    <source>
    </source>
</evidence>
<evidence type="ECO:0007744" key="28">
    <source>
    </source>
</evidence>
<evidence type="ECO:0007744" key="29">
    <source>
    </source>
</evidence>
<evidence type="ECO:0007744" key="30">
    <source>
    </source>
</evidence>
<evidence type="ECO:0007744" key="31">
    <source>
    </source>
</evidence>
<evidence type="ECO:0007829" key="32">
    <source>
        <dbReference type="PDB" id="1K1G"/>
    </source>
</evidence>
<evidence type="ECO:0007829" key="33">
    <source>
        <dbReference type="PDB" id="1O0P"/>
    </source>
</evidence>
<evidence type="ECO:0007829" key="34">
    <source>
        <dbReference type="PDB" id="2M09"/>
    </source>
</evidence>
<evidence type="ECO:0007829" key="35">
    <source>
        <dbReference type="PDB" id="4FXW"/>
    </source>
</evidence>
<evidence type="ECO:0007829" key="36">
    <source>
        <dbReference type="PDB" id="4FXX"/>
    </source>
</evidence>
<evidence type="ECO:0007829" key="37">
    <source>
        <dbReference type="PDB" id="7VH9"/>
    </source>
</evidence>
<evidence type="ECO:0007829" key="38">
    <source>
        <dbReference type="PDB" id="7VPX"/>
    </source>
</evidence>
<sequence length="639" mass="68330">MATGANATPLDFPSKKRKRSRWNQDTMEQKTVIPGMPTVIPPGLTREQERAYIVQLQIEDLTRKLRTGDLGIPPNPEDRSPSPEPIYNSEGKRLNTREFRTRKKLEEERHNLITEMVALNPDFKPPADYKPPATRVSDKVMIPQDEYPEINFVGLLIGPRGNTLKNIEKECNAKIMIRGKGSVKEGKVGRKDGQMLPGEDEPLHALVTANTMENVKKAVEQIRNILKQGIETPEDQNDLRKMQLRELARLNGTLREDDNRILRPWQSSETRSITNTTVCTKCGGAGHIASDCKFQRPGDPQSAQDKARMDKEYLSLMAELGEAPVPASVGSTSGPATTPLASAPRPAAPANNPPPPSLMSTTQSRPPWMNSGPSESRPYHGMHGGGPGGPGGGPHSFPHPLPSLTGGHGGHPMQHNPNGPPPPWMQPPPPPMNQGPHPPGHHGPPPMDQYLGSTPVGSGVYRLHQGKGMMPPPPMGMMPPPPPPPSGQPPPPPSGPLPPWQQQQQQPPPPPPPSSSMASSTPLPWQQNTTTTTTSAGTGSIPPWQQQQAAAAASPGAPQMQGNPTMVPLPPGVQPPLPPGAPPPPPPPPPGSAGMMYAPPPPPPPPMDPSNFVTMMGMGVAGMPPFGMPPAPPPPPPQN</sequence>
<organism>
    <name type="scientific">Homo sapiens</name>
    <name type="common">Human</name>
    <dbReference type="NCBI Taxonomy" id="9606"/>
    <lineage>
        <taxon>Eukaryota</taxon>
        <taxon>Metazoa</taxon>
        <taxon>Chordata</taxon>
        <taxon>Craniata</taxon>
        <taxon>Vertebrata</taxon>
        <taxon>Euteleostomi</taxon>
        <taxon>Mammalia</taxon>
        <taxon>Eutheria</taxon>
        <taxon>Euarchontoglires</taxon>
        <taxon>Primates</taxon>
        <taxon>Haplorrhini</taxon>
        <taxon>Catarrhini</taxon>
        <taxon>Hominidae</taxon>
        <taxon>Homo</taxon>
    </lineage>
</organism>
<gene>
    <name type="primary">SF1</name>
    <name type="synonym">ZFM1</name>
    <name type="synonym">ZNF162</name>
</gene>
<comment type="function">
    <text evidence="5 11 12">Necessary for the ATP-dependent first step of spliceosome assembly. Binds to the intron branch point sequence (BPS) 5'-UACUAAC-3' of the pre-mRNA. May act as transcription repressor.</text>
</comment>
<comment type="subunit">
    <text evidence="5 6 7 8 9 11 12">Binds U2AF2. Interacts with U1 snRNA. Binds EWSR1, FUS and TAF15. Interacts with RBM17.</text>
</comment>
<comment type="interaction">
    <interactant intactId="EBI-744603">
        <id>Q15637</id>
    </interactant>
    <interactant intactId="EBI-1102694">
        <id>P42684</id>
        <label>ABL2</label>
    </interactant>
    <organismsDiffer>false</organismsDiffer>
    <experiments>3</experiments>
</comment>
<comment type="interaction">
    <interactant intactId="EBI-744603">
        <id>Q15637</id>
    </interactant>
    <interactant intactId="EBI-2685240">
        <id>O60308</id>
        <label>CEP104</label>
    </interactant>
    <organismsDiffer>false</organismsDiffer>
    <experiments>4</experiments>
</comment>
<comment type="interaction">
    <interactant intactId="EBI-744603">
        <id>Q15637</id>
    </interactant>
    <interactant intactId="EBI-2555370">
        <id>Q8IWX8</id>
        <label>CHERP</label>
    </interactant>
    <organismsDiffer>false</organismsDiffer>
    <experiments>6</experiments>
</comment>
<comment type="interaction">
    <interactant intactId="EBI-744603">
        <id>Q15637</id>
    </interactant>
    <interactant intactId="EBI-725145">
        <id>O76071</id>
        <label>CIAO1</label>
    </interactant>
    <organismsDiffer>false</organismsDiffer>
    <experiments>3</experiments>
</comment>
<comment type="interaction">
    <interactant intactId="EBI-744603">
        <id>Q15637</id>
    </interactant>
    <interactant intactId="EBI-746012">
        <id>Q92841</id>
        <label>DDX17</label>
    </interactant>
    <organismsDiffer>false</organismsDiffer>
    <experiments>4</experiments>
</comment>
<comment type="interaction">
    <interactant intactId="EBI-744603">
        <id>Q15637</id>
    </interactant>
    <interactant intactId="EBI-351962">
        <id>P17844</id>
        <label>DDX5</label>
    </interactant>
    <organismsDiffer>false</organismsDiffer>
    <experiments>3</experiments>
</comment>
<comment type="interaction">
    <interactant intactId="EBI-744603">
        <id>Q15637</id>
    </interactant>
    <interactant intactId="EBI-7957930">
        <id>Q92567</id>
        <label>FAM168A</label>
    </interactant>
    <organismsDiffer>false</organismsDiffer>
    <experiments>4</experiments>
</comment>
<comment type="interaction">
    <interactant intactId="EBI-744603">
        <id>Q15637</id>
    </interactant>
    <interactant intactId="EBI-1044873">
        <id>Q99729</id>
        <label>HNRNPAB</label>
    </interactant>
    <organismsDiffer>false</organismsDiffer>
    <experiments>4</experiments>
</comment>
<comment type="interaction">
    <interactant intactId="EBI-744603">
        <id>Q15637</id>
    </interactant>
    <interactant intactId="EBI-299727">
        <id>O14979</id>
        <label>HNRNPDL</label>
    </interactant>
    <organismsDiffer>false</organismsDiffer>
    <experiments>4</experiments>
</comment>
<comment type="interaction">
    <interactant intactId="EBI-744603">
        <id>Q15637</id>
    </interactant>
    <interactant intactId="EBI-751942">
        <id>Q7Z7F0</id>
        <label>KHDC4</label>
    </interactant>
    <organismsDiffer>false</organismsDiffer>
    <experiments>5</experiments>
</comment>
<comment type="interaction">
    <interactant intactId="EBI-744603">
        <id>Q15637</id>
    </interactant>
    <interactant intactId="EBI-358383">
        <id>P52294</id>
        <label>KPNA1</label>
    </interactant>
    <organismsDiffer>false</organismsDiffer>
    <experiments>3</experiments>
</comment>
<comment type="interaction">
    <interactant intactId="EBI-744603">
        <id>Q15637</id>
    </interactant>
    <interactant intactId="EBI-349938">
        <id>P52292</id>
        <label>KPNA2</label>
    </interactant>
    <organismsDiffer>false</organismsDiffer>
    <experiments>5</experiments>
</comment>
<comment type="interaction">
    <interactant intactId="EBI-744603">
        <id>Q15637</id>
    </interactant>
    <interactant intactId="EBI-359923">
        <id>O60684</id>
        <label>KPNA6</label>
    </interactant>
    <organismsDiffer>false</organismsDiffer>
    <experiments>4</experiments>
</comment>
<comment type="interaction">
    <interactant intactId="EBI-744603">
        <id>Q15637</id>
    </interactant>
    <interactant intactId="EBI-3957672">
        <id>Q6PEX3</id>
        <label>KRTAP26-1</label>
    </interactant>
    <organismsDiffer>false</organismsDiffer>
    <experiments>3</experiments>
</comment>
<comment type="interaction">
    <interactant intactId="EBI-744603">
        <id>Q15637</id>
    </interactant>
    <interactant intactId="EBI-2340269">
        <id>Q13064</id>
        <label>MKRN3</label>
    </interactant>
    <organismsDiffer>false</organismsDiffer>
    <experiments>3</experiments>
</comment>
<comment type="interaction">
    <interactant intactId="EBI-744603">
        <id>Q15637</id>
    </interactant>
    <interactant intactId="EBI-78458">
        <id>P55345</id>
        <label>PRMT2</label>
    </interactant>
    <organismsDiffer>false</organismsDiffer>
    <experiments>5</experiments>
</comment>
<comment type="interaction">
    <interactant intactId="EBI-744603">
        <id>Q15637</id>
    </interactant>
    <interactant intactId="EBI-473291">
        <id>O75400</id>
        <label>PRPF40A</label>
    </interactant>
    <organismsDiffer>false</organismsDiffer>
    <experiments>3</experiments>
</comment>
<comment type="interaction">
    <interactant intactId="EBI-744603">
        <id>Q15637</id>
    </interactant>
    <interactant intactId="EBI-348380">
        <id>P25788</id>
        <label>PSMA3</label>
    </interactant>
    <organismsDiffer>false</organismsDiffer>
    <experiments>3</experiments>
</comment>
<comment type="interaction">
    <interactant intactId="EBI-744603">
        <id>Q15637</id>
    </interactant>
    <interactant intactId="EBI-740272">
        <id>Q96I25</id>
        <label>RBM17</label>
    </interactant>
    <organismsDiffer>false</organismsDiffer>
    <experiments>8</experiments>
</comment>
<comment type="interaction">
    <interactant intactId="EBI-744603">
        <id>Q15637</id>
    </interactant>
    <interactant intactId="EBI-744603">
        <id>Q15637</id>
        <label>SF1</label>
    </interactant>
    <organismsDiffer>false</organismsDiffer>
    <experiments>3</experiments>
</comment>
<comment type="interaction">
    <interactant intactId="EBI-744603">
        <id>Q15637</id>
    </interactant>
    <interactant intactId="EBI-1054743">
        <id>Q15459</id>
        <label>SF3A1</label>
    </interactant>
    <organismsDiffer>false</organismsDiffer>
    <experiments>8</experiments>
</comment>
<comment type="interaction">
    <interactant intactId="EBI-744603">
        <id>Q15637</id>
    </interactant>
    <interactant intactId="EBI-2462271">
        <id>Q15428</id>
        <label>SF3A2</label>
    </interactant>
    <organismsDiffer>false</organismsDiffer>
    <experiments>2</experiments>
</comment>
<comment type="interaction">
    <interactant intactId="EBI-744603">
        <id>Q15637</id>
    </interactant>
    <interactant intactId="EBI-1055938">
        <id>Q12872</id>
        <label>SFSWAP</label>
    </interactant>
    <organismsDiffer>false</organismsDiffer>
    <experiments>2</experiments>
</comment>
<comment type="interaction">
    <interactant intactId="EBI-744603">
        <id>Q15637</id>
    </interactant>
    <interactant intactId="EBI-749955">
        <id>Q86WT6</id>
        <label>TRIM69</label>
    </interactant>
    <organismsDiffer>false</organismsDiffer>
    <experiments>3</experiments>
</comment>
<comment type="interaction">
    <interactant intactId="EBI-744603">
        <id>Q15637</id>
    </interactant>
    <interactant intactId="EBI-742339">
        <id>P26368</id>
        <label>U2AF2</label>
    </interactant>
    <organismsDiffer>false</organismsDiffer>
    <experiments>23</experiments>
</comment>
<comment type="interaction">
    <interactant intactId="EBI-744603">
        <id>Q15637</id>
    </interactant>
    <interactant intactId="EBI-1753608">
        <id>Q8TAS1</id>
        <label>UHMK1</label>
    </interactant>
    <organismsDiffer>false</organismsDiffer>
    <experiments>4</experiments>
</comment>
<comment type="interaction">
    <interactant intactId="EBI-744603">
        <id>Q15637</id>
    </interactant>
    <interactant intactId="EBI-11073001">
        <id>Q80V31</id>
        <label>Cep104</label>
    </interactant>
    <organismsDiffer>true</organismsDiffer>
    <experiments>3</experiments>
</comment>
<comment type="interaction">
    <interactant intactId="EBI-744603">
        <id>Q15637</id>
    </interactant>
    <interactant intactId="EBI-2366446">
        <id>Q8CGZ0</id>
        <label>Cherp</label>
    </interactant>
    <organismsDiffer>true</organismsDiffer>
    <experiments>3</experiments>
</comment>
<comment type="interaction">
    <interactant intactId="EBI-744603">
        <id>Q15637</id>
    </interactant>
    <interactant intactId="EBI-769168">
        <id>Q68FD5</id>
        <label>Cltc</label>
    </interactant>
    <organismsDiffer>true</organismsDiffer>
    <experiments>3</experiments>
</comment>
<comment type="interaction">
    <interactant intactId="EBI-744603">
        <id>Q15637</id>
    </interactant>
    <interactant intactId="EBI-11298408">
        <id>Q3TCX3</id>
        <label>Khdc4</label>
    </interactant>
    <organismsDiffer>true</organismsDiffer>
    <experiments>3</experiments>
</comment>
<comment type="interaction">
    <interactant intactId="EBI-744603">
        <id>Q15637</id>
    </interactant>
    <interactant intactId="EBI-8573008">
        <id>Q60960</id>
        <label>Kpna1</label>
    </interactant>
    <organismsDiffer>true</organismsDiffer>
    <experiments>3</experiments>
</comment>
<comment type="interaction">
    <interactant intactId="EBI-744603">
        <id>Q15637</id>
    </interactant>
    <interactant intactId="EBI-3043908">
        <id>P52293</id>
        <label>Kpna2</label>
    </interactant>
    <organismsDiffer>true</organismsDiffer>
    <experiments>3</experiments>
</comment>
<comment type="interaction">
    <interactant intactId="EBI-744603">
        <id>Q15637</id>
    </interactant>
    <interactant intactId="EBI-8372758">
        <id>O35343</id>
        <label>Kpna4</label>
    </interactant>
    <organismsDiffer>true</organismsDiffer>
    <experiments>3</experiments>
</comment>
<comment type="interaction">
    <interactant intactId="EBI-744603">
        <id>Q15637</id>
    </interactant>
    <interactant intactId="EBI-8387273">
        <id>Q3USH5</id>
        <label>Sfswap</label>
    </interactant>
    <organismsDiffer>true</organismsDiffer>
    <experiments>3</experiments>
</comment>
<comment type="interaction">
    <interactant intactId="EBI-744603">
        <id>Q15637</id>
    </interactant>
    <interactant intactId="EBI-8321355">
        <id>P26369</id>
        <label>U2af2</label>
    </interactant>
    <organismsDiffer>true</organismsDiffer>
    <experiments>3</experiments>
</comment>
<comment type="interaction">
    <interactant intactId="EBI-12223157">
        <id>Q15637-4</id>
    </interactant>
    <interactant intactId="EBI-930964">
        <id>P54253</id>
        <label>ATXN1</label>
    </interactant>
    <organismsDiffer>false</organismsDiffer>
    <experiments>3</experiments>
</comment>
<comment type="interaction">
    <interactant intactId="EBI-12223157">
        <id>Q15637-4</id>
    </interactant>
    <interactant intactId="EBI-713635">
        <id>O43639</id>
        <label>NCK2</label>
    </interactant>
    <organismsDiffer>false</organismsDiffer>
    <experiments>3</experiments>
</comment>
<comment type="interaction">
    <interactant intactId="EBI-12223157">
        <id>Q15637-4</id>
    </interactant>
    <interactant intactId="EBI-11529177">
        <id>Q9UHX1-2</id>
        <label>PUF60</label>
    </interactant>
    <organismsDiffer>false</organismsDiffer>
    <experiments>3</experiments>
</comment>
<comment type="interaction">
    <interactant intactId="EBI-12223157">
        <id>Q15637-4</id>
    </interactant>
    <interactant intactId="EBI-740272">
        <id>Q96I25</id>
        <label>RBM17</label>
    </interactant>
    <organismsDiffer>false</organismsDiffer>
    <experiments>3</experiments>
</comment>
<comment type="interaction">
    <interactant intactId="EBI-12223157">
        <id>Q15637-4</id>
    </interactant>
    <interactant intactId="EBI-81088">
        <id>Q15436</id>
        <label>SEC23A</label>
    </interactant>
    <organismsDiffer>false</organismsDiffer>
    <experiments>3</experiments>
</comment>
<comment type="interaction">
    <interactant intactId="EBI-12223157">
        <id>Q15637-4</id>
    </interactant>
    <interactant intactId="EBI-12076664">
        <id>O14787-2</id>
        <label>TNPO2</label>
    </interactant>
    <organismsDiffer>false</organismsDiffer>
    <experiments>3</experiments>
</comment>
<comment type="interaction">
    <interactant intactId="EBI-12223157">
        <id>Q15637-4</id>
    </interactant>
    <interactant intactId="EBI-10309345">
        <id>Q9NX01</id>
        <label>TXNL4B</label>
    </interactant>
    <organismsDiffer>false</organismsDiffer>
    <experiments>3</experiments>
</comment>
<comment type="interaction">
    <interactant intactId="EBI-12223157">
        <id>Q15637-4</id>
    </interactant>
    <interactant intactId="EBI-11097439">
        <id>P26368-2</id>
        <label>U2AF2</label>
    </interactant>
    <organismsDiffer>false</organismsDiffer>
    <experiments>5</experiments>
</comment>
<comment type="interaction">
    <interactant intactId="EBI-12223157">
        <id>Q15637-4</id>
    </interactant>
    <interactant intactId="EBI-607755">
        <id>Q9BZL1</id>
        <label>UBL5</label>
    </interactant>
    <organismsDiffer>false</organismsDiffer>
    <experiments>3</experiments>
</comment>
<comment type="subcellular location">
    <subcellularLocation>
        <location>Nucleus</location>
    </subcellularLocation>
</comment>
<comment type="alternative products">
    <event type="alternative splicing"/>
    <isoform>
        <id>Q15637-1</id>
        <name>1</name>
        <name>SF1-HL1</name>
        <sequence type="displayed"/>
    </isoform>
    <isoform>
        <id>Q15637-2</id>
        <name>2</name>
        <name>SF1-Bo</name>
        <name>Bone</name>
        <sequence type="described" ref="VSP_008839"/>
    </isoform>
    <isoform>
        <id>Q15637-3</id>
        <name>3</name>
        <name>ZFM1-A</name>
        <name>ZFM1-ABCDEF</name>
        <sequence type="described" ref="VSP_008838"/>
    </isoform>
    <isoform>
        <id>Q15637-4</id>
        <name>4</name>
        <name>ZFM1-B</name>
        <name>ZFM1-ABCDF</name>
        <sequence type="described" ref="VSP_008835 VSP_008836"/>
    </isoform>
    <isoform>
        <id>Q15637-5</id>
        <name>5</name>
        <sequence type="described" ref="VSP_008833 VSP_008835 VSP_008836"/>
    </isoform>
    <isoform>
        <id>Q15637-6</id>
        <name>6</name>
        <name>ZFM1-D</name>
        <name>B6</name>
        <sequence type="described" ref="VSP_008834 VSP_008837"/>
    </isoform>
    <isoform>
        <id>Q15637-7</id>
        <name>7</name>
        <sequence type="described" ref="VSP_045274"/>
    </isoform>
    <text>Additional isoforms seem to exist.</text>
</comment>
<comment type="tissue specificity">
    <text evidence="10">Detected in lung, ovary, adrenal gland, colon, kidney, muscle, pancreas, thyroid, placenta, brain, liver and heart.</text>
</comment>
<comment type="PTM">
    <text evidence="5">Phosphorylation on Ser-20 interferes with U2AF2 binding and spliceosome assembly. Isoform 6 is phosphorylated on Ser-463.</text>
</comment>
<comment type="similarity">
    <text evidence="19">Belongs to the BBP/SF1 family.</text>
</comment>
<comment type="sequence caution" evidence="19">
    <conflict type="erroneous initiation">
        <sequence resource="EMBL-CDS" id="AAH00773"/>
    </conflict>
</comment>
<reference key="1">
    <citation type="journal article" date="1996" name="RNA">
        <title>Mammalian splicing factor SF1 is encoded by variant cDNAs and binds to RNA.</title>
        <authorList>
            <person name="Arning S."/>
            <person name="Grueter P."/>
            <person name="Bilbe G."/>
            <person name="Kraemer A."/>
        </authorList>
    </citation>
    <scope>NUCLEOTIDE SEQUENCE [MRNA] (ISOFORMS 1 AND 2)</scope>
    <scope>PROTEIN SEQUENCE OF 20-30 AND 136-150</scope>
    <scope>VARIANT THR-357</scope>
    <scope>FUNCTION</scope>
    <scope>INTERACTION WITH U1 SNRNA</scope>
    <scope>RNA-BINDING</scope>
    <source>
        <tissue>Bone</tissue>
        <tissue>Cervix carcinoma</tissue>
    </source>
</reference>
<reference key="2">
    <citation type="journal article" date="1997" name="Genomics">
        <title>Identification of two novel isoforms of the ZNF162 gene: a growing family of signal transduction and activator of RNA proteins.</title>
        <authorList>
            <person name="Caslini C."/>
            <person name="Spinelli O."/>
            <person name="Cazzaniga G."/>
            <person name="Golay J."/>
            <person name="De Gioia L."/>
            <person name="Pedretti A."/>
            <person name="Breviario F."/>
            <person name="Amaru R."/>
            <person name="Barbui T."/>
            <person name="Biondi A."/>
            <person name="Introna M."/>
            <person name="Rambaldi A."/>
        </authorList>
    </citation>
    <scope>NUCLEOTIDE SEQUENCE [MRNA] (ISOFORMS 1 AND 6)</scope>
    <source>
        <tissue>Myeloid leukemia cell</tissue>
    </source>
</reference>
<reference key="3">
    <citation type="journal article" date="1994" name="Hum. Mol. Genet.">
        <title>Isolation and characterization of a novel gene encoding nuclear protein at a locus (D11S636) tightly linked to multiple endocrine neoplasia type 1 (MEN1).</title>
        <authorList>
            <person name="Toda T."/>
            <person name="Iida A."/>
            <person name="Miwa T."/>
            <person name="Nakamura Y."/>
            <person name="Imai T."/>
        </authorList>
    </citation>
    <scope>NUCLEOTIDE SEQUENCE [MRNA] (ISOFORMS 3 AND 4)</scope>
    <scope>TISSUE SPECIFICITY</scope>
    <source>
        <tissue>Brain cortex</tissue>
        <tissue>Cerebellum</tissue>
        <tissue>Fetal liver</tissue>
    </source>
</reference>
<reference key="4">
    <citation type="journal article" date="2004" name="Nat. Genet.">
        <title>Complete sequencing and characterization of 21,243 full-length human cDNAs.</title>
        <authorList>
            <person name="Ota T."/>
            <person name="Suzuki Y."/>
            <person name="Nishikawa T."/>
            <person name="Otsuki T."/>
            <person name="Sugiyama T."/>
            <person name="Irie R."/>
            <person name="Wakamatsu A."/>
            <person name="Hayashi K."/>
            <person name="Sato H."/>
            <person name="Nagai K."/>
            <person name="Kimura K."/>
            <person name="Makita H."/>
            <person name="Sekine M."/>
            <person name="Obayashi M."/>
            <person name="Nishi T."/>
            <person name="Shibahara T."/>
            <person name="Tanaka T."/>
            <person name="Ishii S."/>
            <person name="Yamamoto J."/>
            <person name="Saito K."/>
            <person name="Kawai Y."/>
            <person name="Isono Y."/>
            <person name="Nakamura Y."/>
            <person name="Nagahari K."/>
            <person name="Murakami K."/>
            <person name="Yasuda T."/>
            <person name="Iwayanagi T."/>
            <person name="Wagatsuma M."/>
            <person name="Shiratori A."/>
            <person name="Sudo H."/>
            <person name="Hosoiri T."/>
            <person name="Kaku Y."/>
            <person name="Kodaira H."/>
            <person name="Kondo H."/>
            <person name="Sugawara M."/>
            <person name="Takahashi M."/>
            <person name="Kanda K."/>
            <person name="Yokoi T."/>
            <person name="Furuya T."/>
            <person name="Kikkawa E."/>
            <person name="Omura Y."/>
            <person name="Abe K."/>
            <person name="Kamihara K."/>
            <person name="Katsuta N."/>
            <person name="Sato K."/>
            <person name="Tanikawa M."/>
            <person name="Yamazaki M."/>
            <person name="Ninomiya K."/>
            <person name="Ishibashi T."/>
            <person name="Yamashita H."/>
            <person name="Murakawa K."/>
            <person name="Fujimori K."/>
            <person name="Tanai H."/>
            <person name="Kimata M."/>
            <person name="Watanabe M."/>
            <person name="Hiraoka S."/>
            <person name="Chiba Y."/>
            <person name="Ishida S."/>
            <person name="Ono Y."/>
            <person name="Takiguchi S."/>
            <person name="Watanabe S."/>
            <person name="Yosida M."/>
            <person name="Hotuta T."/>
            <person name="Kusano J."/>
            <person name="Kanehori K."/>
            <person name="Takahashi-Fujii A."/>
            <person name="Hara H."/>
            <person name="Tanase T.-O."/>
            <person name="Nomura Y."/>
            <person name="Togiya S."/>
            <person name="Komai F."/>
            <person name="Hara R."/>
            <person name="Takeuchi K."/>
            <person name="Arita M."/>
            <person name="Imose N."/>
            <person name="Musashino K."/>
            <person name="Yuuki H."/>
            <person name="Oshima A."/>
            <person name="Sasaki N."/>
            <person name="Aotsuka S."/>
            <person name="Yoshikawa Y."/>
            <person name="Matsunawa H."/>
            <person name="Ichihara T."/>
            <person name="Shiohata N."/>
            <person name="Sano S."/>
            <person name="Moriya S."/>
            <person name="Momiyama H."/>
            <person name="Satoh N."/>
            <person name="Takami S."/>
            <person name="Terashima Y."/>
            <person name="Suzuki O."/>
            <person name="Nakagawa S."/>
            <person name="Senoh A."/>
            <person name="Mizoguchi H."/>
            <person name="Goto Y."/>
            <person name="Shimizu F."/>
            <person name="Wakebe H."/>
            <person name="Hishigaki H."/>
            <person name="Watanabe T."/>
            <person name="Sugiyama A."/>
            <person name="Takemoto M."/>
            <person name="Kawakami B."/>
            <person name="Yamazaki M."/>
            <person name="Watanabe K."/>
            <person name="Kumagai A."/>
            <person name="Itakura S."/>
            <person name="Fukuzumi Y."/>
            <person name="Fujimori Y."/>
            <person name="Komiyama M."/>
            <person name="Tashiro H."/>
            <person name="Tanigami A."/>
            <person name="Fujiwara T."/>
            <person name="Ono T."/>
            <person name="Yamada K."/>
            <person name="Fujii Y."/>
            <person name="Ozaki K."/>
            <person name="Hirao M."/>
            <person name="Ohmori Y."/>
            <person name="Kawabata A."/>
            <person name="Hikiji T."/>
            <person name="Kobatake N."/>
            <person name="Inagaki H."/>
            <person name="Ikema Y."/>
            <person name="Okamoto S."/>
            <person name="Okitani R."/>
            <person name="Kawakami T."/>
            <person name="Noguchi S."/>
            <person name="Itoh T."/>
            <person name="Shigeta K."/>
            <person name="Senba T."/>
            <person name="Matsumura K."/>
            <person name="Nakajima Y."/>
            <person name="Mizuno T."/>
            <person name="Morinaga M."/>
            <person name="Sasaki M."/>
            <person name="Togashi T."/>
            <person name="Oyama M."/>
            <person name="Hata H."/>
            <person name="Watanabe M."/>
            <person name="Komatsu T."/>
            <person name="Mizushima-Sugano J."/>
            <person name="Satoh T."/>
            <person name="Shirai Y."/>
            <person name="Takahashi Y."/>
            <person name="Nakagawa K."/>
            <person name="Okumura K."/>
            <person name="Nagase T."/>
            <person name="Nomura N."/>
            <person name="Kikuchi H."/>
            <person name="Masuho Y."/>
            <person name="Yamashita R."/>
            <person name="Nakai K."/>
            <person name="Yada T."/>
            <person name="Nakamura Y."/>
            <person name="Ohara O."/>
            <person name="Isogai T."/>
            <person name="Sugano S."/>
        </authorList>
    </citation>
    <scope>NUCLEOTIDE SEQUENCE [LARGE SCALE MRNA] (ISOFORM 7)</scope>
    <source>
        <tissue>Cerebellum</tissue>
    </source>
</reference>
<reference key="5">
    <citation type="journal article" date="2006" name="Nature">
        <title>Human chromosome 11 DNA sequence and analysis including novel gene identification.</title>
        <authorList>
            <person name="Taylor T.D."/>
            <person name="Noguchi H."/>
            <person name="Totoki Y."/>
            <person name="Toyoda A."/>
            <person name="Kuroki Y."/>
            <person name="Dewar K."/>
            <person name="Lloyd C."/>
            <person name="Itoh T."/>
            <person name="Takeda T."/>
            <person name="Kim D.-W."/>
            <person name="She X."/>
            <person name="Barlow K.F."/>
            <person name="Bloom T."/>
            <person name="Bruford E."/>
            <person name="Chang J.L."/>
            <person name="Cuomo C.A."/>
            <person name="Eichler E."/>
            <person name="FitzGerald M.G."/>
            <person name="Jaffe D.B."/>
            <person name="LaButti K."/>
            <person name="Nicol R."/>
            <person name="Park H.-S."/>
            <person name="Seaman C."/>
            <person name="Sougnez C."/>
            <person name="Yang X."/>
            <person name="Zimmer A.R."/>
            <person name="Zody M.C."/>
            <person name="Birren B.W."/>
            <person name="Nusbaum C."/>
            <person name="Fujiyama A."/>
            <person name="Hattori M."/>
            <person name="Rogers J."/>
            <person name="Lander E.S."/>
            <person name="Sakaki Y."/>
        </authorList>
    </citation>
    <scope>NUCLEOTIDE SEQUENCE [LARGE SCALE GENOMIC DNA]</scope>
</reference>
<reference key="6">
    <citation type="journal article" date="2004" name="Genome Res.">
        <title>The status, quality, and expansion of the NIH full-length cDNA project: the Mammalian Gene Collection (MGC).</title>
        <authorList>
            <consortium name="The MGC Project Team"/>
        </authorList>
    </citation>
    <scope>NUCLEOTIDE SEQUENCE [LARGE SCALE MRNA] (ISOFORMS 1; 4 AND 5)</scope>
    <source>
        <tissue>Brain</tissue>
        <tissue>Eye</tissue>
        <tissue>Kidney</tissue>
        <tissue>Muscle</tissue>
        <tissue>Skin</tissue>
    </source>
</reference>
<reference key="7">
    <citation type="journal article" date="1998" name="Gene">
        <title>Diverse modes of alternative splicing of human splicing factor SF1 deduced from the exon-intron structure of the gene.</title>
        <authorList>
            <person name="Kraemer A."/>
            <person name="Quentin M."/>
            <person name="Mulhauser F."/>
        </authorList>
    </citation>
    <scope>NUCLEOTIDE SEQUENCE [GENOMIC DNA] OF 1-295</scope>
</reference>
<reference key="8">
    <citation type="submission" date="2006-05" db="UniProtKB">
        <authorList>
            <person name="Bienvenut W.V."/>
            <person name="Kanor S."/>
            <person name="Tissot J.-D."/>
            <person name="Quadroni M."/>
        </authorList>
    </citation>
    <scope>PROTEIN SEQUENCE OF 2-15</scope>
    <scope>CLEAVAGE OF INITIATOR METHIONINE</scope>
    <scope>ACETYLATION AT ALA-2</scope>
    <scope>IDENTIFICATION BY MASS SPECTROMETRY</scope>
    <source>
        <tissue>T-cell</tissue>
    </source>
</reference>
<reference key="9">
    <citation type="journal article" date="1999" name="EMBO J.">
        <title>Phosphorylation of splicing factor SF1 on Ser20 by cGMP-dependent protein kinase regulates spliceosome assembly.</title>
        <authorList>
            <person name="Wang X."/>
            <person name="Bruderer S."/>
            <person name="Rafi Z."/>
            <person name="Xue J."/>
            <person name="Milburn P.J."/>
            <person name="Kraemer A."/>
            <person name="Robinson P.J."/>
        </authorList>
    </citation>
    <scope>PROTEIN SEQUENCE OF 19-28; 94-103; 228-239 AND 298-308</scope>
    <scope>FUNCTION</scope>
    <scope>INTERACTION WITH U2AF2</scope>
    <scope>MUTAGENESIS OF SER-20</scope>
    <scope>PHOSPHORYLATION AT SER-20</scope>
</reference>
<reference key="10">
    <citation type="journal article" date="2002" name="Genome Res.">
        <title>Large-scale proteomic analysis of the human spliceosome.</title>
        <authorList>
            <person name="Rappsilber J."/>
            <person name="Ryder U."/>
            <person name="Lamond A.I."/>
            <person name="Mann M."/>
        </authorList>
    </citation>
    <scope>PROTEIN SEQUENCE OF 110-135</scope>
    <scope>IDENTIFICATION BY MASS SPECTROMETRY</scope>
    <scope>INTERACTION WITH THE SPLICEOSOME</scope>
</reference>
<reference key="11">
    <citation type="journal article" date="1998" name="J. Biol. Chem.">
        <title>The transcriptional repressor ZFM1 interacts with and modulates the ability of EWS to activate transcription.</title>
        <authorList>
            <person name="Zhang D."/>
            <person name="Paley A.J."/>
            <person name="Childs G."/>
        </authorList>
    </citation>
    <scope>FUNCTION</scope>
    <scope>INTERACTION WITH EWSR1; FUS AND TAF15</scope>
</reference>
<reference key="12">
    <citation type="journal article" date="2006" name="Cell">
        <title>Global, in vivo, and site-specific phosphorylation dynamics in signaling networks.</title>
        <authorList>
            <person name="Olsen J.V."/>
            <person name="Blagoev B."/>
            <person name="Gnad F."/>
            <person name="Macek B."/>
            <person name="Kumar C."/>
            <person name="Mortensen P."/>
            <person name="Mann M."/>
        </authorList>
    </citation>
    <scope>IDENTIFICATION BY MASS SPECTROMETRY [LARGE SCALE ANALYSIS]</scope>
    <source>
        <tissue>Cervix carcinoma</tissue>
    </source>
</reference>
<reference key="13">
    <citation type="journal article" date="2006" name="Nat. Biotechnol.">
        <title>A probability-based approach for high-throughput protein phosphorylation analysis and site localization.</title>
        <authorList>
            <person name="Beausoleil S.A."/>
            <person name="Villen J."/>
            <person name="Gerber S.A."/>
            <person name="Rush J."/>
            <person name="Gygi S.P."/>
        </authorList>
    </citation>
    <scope>PHOSPHORYLATION [LARGE SCALE ANALYSIS] AT SER-463 (ISOFORM 6)</scope>
    <scope>IDENTIFICATION BY MASS SPECTROMETRY [LARGE SCALE ANALYSIS]</scope>
    <source>
        <tissue>Cervix carcinoma</tissue>
    </source>
</reference>
<reference key="14">
    <citation type="journal article" date="2007" name="Nat. Struct. Mol. Biol.">
        <title>U2AF-homology motif interactions are required for alternative splicing regulation by SPF45.</title>
        <authorList>
            <person name="Corsini L."/>
            <person name="Bonnal S."/>
            <person name="Basquin J."/>
            <person name="Hothorn M."/>
            <person name="Scheffzek K."/>
            <person name="Valcarcel J."/>
            <person name="Sattler M."/>
        </authorList>
    </citation>
    <scope>INTERACTION WITH RBM17</scope>
</reference>
<reference key="15">
    <citation type="journal article" date="2008" name="J. Proteome Res.">
        <title>Combining protein-based IMAC, peptide-based IMAC, and MudPIT for efficient phosphoproteomic analysis.</title>
        <authorList>
            <person name="Cantin G.T."/>
            <person name="Yi W."/>
            <person name="Lu B."/>
            <person name="Park S.K."/>
            <person name="Xu T."/>
            <person name="Lee J.-D."/>
            <person name="Yates J.R. III"/>
        </authorList>
    </citation>
    <scope>PHOSPHORYLATION [LARGE SCALE ANALYSIS] AT SER-463 (ISOFORM 6)</scope>
    <scope>IDENTIFICATION BY MASS SPECTROMETRY [LARGE SCALE ANALYSIS]</scope>
    <source>
        <tissue>Cervix carcinoma</tissue>
    </source>
</reference>
<reference key="16">
    <citation type="journal article" date="2008" name="Proc. Natl. Acad. Sci. U.S.A.">
        <title>A quantitative atlas of mitotic phosphorylation.</title>
        <authorList>
            <person name="Dephoure N."/>
            <person name="Zhou C."/>
            <person name="Villen J."/>
            <person name="Beausoleil S.A."/>
            <person name="Bakalarski C.E."/>
            <person name="Elledge S.J."/>
            <person name="Gygi S.P."/>
        </authorList>
    </citation>
    <scope>PHOSPHORYLATION [LARGE SCALE ANALYSIS] AT SER-80 AND SER-82</scope>
    <scope>PHOSPHORYLATION [LARGE SCALE ANALYSIS] AT SER-463 (ISOFORM 6)</scope>
    <scope>IDENTIFICATION BY MASS SPECTROMETRY [LARGE SCALE ANALYSIS]</scope>
    <source>
        <tissue>Cervix carcinoma</tissue>
    </source>
</reference>
<reference key="17">
    <citation type="journal article" date="2009" name="Anal. Chem.">
        <title>Lys-N and trypsin cover complementary parts of the phosphoproteome in a refined SCX-based approach.</title>
        <authorList>
            <person name="Gauci S."/>
            <person name="Helbig A.O."/>
            <person name="Slijper M."/>
            <person name="Krijgsveld J."/>
            <person name="Heck A.J."/>
            <person name="Mohammed S."/>
        </authorList>
    </citation>
    <scope>ACETYLATION [LARGE SCALE ANALYSIS] AT ALA-2</scope>
    <scope>CLEAVAGE OF INITIATOR METHIONINE [LARGE SCALE ANALYSIS]</scope>
    <scope>IDENTIFICATION BY MASS SPECTROMETRY [LARGE SCALE ANALYSIS]</scope>
</reference>
<reference key="18">
    <citation type="journal article" date="2009" name="Sci. Signal.">
        <title>Quantitative phosphoproteomic analysis of T cell receptor signaling reveals system-wide modulation of protein-protein interactions.</title>
        <authorList>
            <person name="Mayya V."/>
            <person name="Lundgren D.H."/>
            <person name="Hwang S.-I."/>
            <person name="Rezaul K."/>
            <person name="Wu L."/>
            <person name="Eng J.K."/>
            <person name="Rodionov V."/>
            <person name="Han D.K."/>
        </authorList>
    </citation>
    <scope>PHOSPHORYLATION [LARGE SCALE ANALYSIS] AT SER-80 AND SER-82</scope>
    <scope>IDENTIFICATION BY MASS SPECTROMETRY [LARGE SCALE ANALYSIS]</scope>
    <source>
        <tissue>Leukemic T-cell</tissue>
    </source>
</reference>
<reference key="19">
    <citation type="journal article" date="2010" name="Sci. Signal.">
        <title>Quantitative phosphoproteomics reveals widespread full phosphorylation site occupancy during mitosis.</title>
        <authorList>
            <person name="Olsen J.V."/>
            <person name="Vermeulen M."/>
            <person name="Santamaria A."/>
            <person name="Kumar C."/>
            <person name="Miller M.L."/>
            <person name="Jensen L.J."/>
            <person name="Gnad F."/>
            <person name="Cox J."/>
            <person name="Jensen T.S."/>
            <person name="Nigg E.A."/>
            <person name="Brunak S."/>
            <person name="Mann M."/>
        </authorList>
    </citation>
    <scope>PHOSPHORYLATION [LARGE SCALE ANALYSIS] AT SER-80 AND SER-82</scope>
    <scope>IDENTIFICATION BY MASS SPECTROMETRY [LARGE SCALE ANALYSIS]</scope>
    <source>
        <tissue>Cervix carcinoma</tissue>
    </source>
</reference>
<reference key="20">
    <citation type="journal article" date="2011" name="BMC Syst. Biol.">
        <title>Initial characterization of the human central proteome.</title>
        <authorList>
            <person name="Burkard T.R."/>
            <person name="Planyavsky M."/>
            <person name="Kaupe I."/>
            <person name="Breitwieser F.P."/>
            <person name="Buerckstuemmer T."/>
            <person name="Bennett K.L."/>
            <person name="Superti-Furga G."/>
            <person name="Colinge J."/>
        </authorList>
    </citation>
    <scope>IDENTIFICATION BY MASS SPECTROMETRY [LARGE SCALE ANALYSIS]</scope>
</reference>
<reference key="21">
    <citation type="journal article" date="2011" name="Sci. Signal.">
        <title>System-wide temporal characterization of the proteome and phosphoproteome of human embryonic stem cell differentiation.</title>
        <authorList>
            <person name="Rigbolt K.T."/>
            <person name="Prokhorova T.A."/>
            <person name="Akimov V."/>
            <person name="Henningsen J."/>
            <person name="Johansen P.T."/>
            <person name="Kratchmarova I."/>
            <person name="Kassem M."/>
            <person name="Mann M."/>
            <person name="Olsen J.V."/>
            <person name="Blagoev B."/>
        </authorList>
    </citation>
    <scope>PHOSPHORYLATION [LARGE SCALE ANALYSIS] AT SER-80 AND SER-82</scope>
    <scope>IDENTIFICATION BY MASS SPECTROMETRY [LARGE SCALE ANALYSIS]</scope>
</reference>
<reference key="22">
    <citation type="journal article" date="2012" name="Mol. Cell. Proteomics">
        <title>Comparative large-scale characterisation of plant vs. mammal proteins reveals similar and idiosyncratic N-alpha acetylation features.</title>
        <authorList>
            <person name="Bienvenut W.V."/>
            <person name="Sumpton D."/>
            <person name="Martinez A."/>
            <person name="Lilla S."/>
            <person name="Espagne C."/>
            <person name="Meinnel T."/>
            <person name="Giglione C."/>
        </authorList>
    </citation>
    <scope>ACETYLATION [LARGE SCALE ANALYSIS] AT ALA-2</scope>
    <scope>CLEAVAGE OF INITIATOR METHIONINE [LARGE SCALE ANALYSIS]</scope>
    <scope>IDENTIFICATION BY MASS SPECTROMETRY [LARGE SCALE ANALYSIS]</scope>
</reference>
<reference key="23">
    <citation type="journal article" date="2012" name="Proc. Natl. Acad. Sci. U.S.A.">
        <title>N-terminal acetylome analyses and functional insights of the N-terminal acetyltransferase NatB.</title>
        <authorList>
            <person name="Van Damme P."/>
            <person name="Lasa M."/>
            <person name="Polevoda B."/>
            <person name="Gazquez C."/>
            <person name="Elosegui-Artola A."/>
            <person name="Kim D.S."/>
            <person name="De Juan-Pardo E."/>
            <person name="Demeyer K."/>
            <person name="Hole K."/>
            <person name="Larrea E."/>
            <person name="Timmerman E."/>
            <person name="Prieto J."/>
            <person name="Arnesen T."/>
            <person name="Sherman F."/>
            <person name="Gevaert K."/>
            <person name="Aldabe R."/>
        </authorList>
    </citation>
    <scope>ACETYLATION [LARGE SCALE ANALYSIS] AT ALA-2</scope>
    <scope>CLEAVAGE OF INITIATOR METHIONINE [LARGE SCALE ANALYSIS]</scope>
    <scope>IDENTIFICATION BY MASS SPECTROMETRY [LARGE SCALE ANALYSIS]</scope>
</reference>
<reference key="24">
    <citation type="journal article" date="2013" name="J. Proteome Res.">
        <title>Toward a comprehensive characterization of a human cancer cell phosphoproteome.</title>
        <authorList>
            <person name="Zhou H."/>
            <person name="Di Palma S."/>
            <person name="Preisinger C."/>
            <person name="Peng M."/>
            <person name="Polat A.N."/>
            <person name="Heck A.J."/>
            <person name="Mohammed S."/>
        </authorList>
    </citation>
    <scope>PHOSPHORYLATION [LARGE SCALE ANALYSIS] AT SER-14; SER-80 AND SER-82</scope>
    <scope>IDENTIFICATION BY MASS SPECTROMETRY [LARGE SCALE ANALYSIS]</scope>
    <source>
        <tissue>Cervix carcinoma</tissue>
        <tissue>Erythroleukemia</tissue>
    </source>
</reference>
<reference key="25">
    <citation type="journal article" date="2014" name="J. Proteomics">
        <title>An enzyme assisted RP-RPLC approach for in-depth analysis of human liver phosphoproteome.</title>
        <authorList>
            <person name="Bian Y."/>
            <person name="Song C."/>
            <person name="Cheng K."/>
            <person name="Dong M."/>
            <person name="Wang F."/>
            <person name="Huang J."/>
            <person name="Sun D."/>
            <person name="Wang L."/>
            <person name="Ye M."/>
            <person name="Zou H."/>
        </authorList>
    </citation>
    <scope>PHOSPHORYLATION [LARGE SCALE ANALYSIS] AT TYR-87 AND SER-89</scope>
    <scope>IDENTIFICATION BY MASS SPECTROMETRY [LARGE SCALE ANALYSIS]</scope>
    <source>
        <tissue>Liver</tissue>
    </source>
</reference>
<reference key="26">
    <citation type="journal article" date="2014" name="Mol. Cell. Proteomics">
        <title>Immunoaffinity enrichment and mass spectrometry analysis of protein methylation.</title>
        <authorList>
            <person name="Guo A."/>
            <person name="Gu H."/>
            <person name="Zhou J."/>
            <person name="Mulhern D."/>
            <person name="Wang Y."/>
            <person name="Lee K.A."/>
            <person name="Yang V."/>
            <person name="Aguiar M."/>
            <person name="Kornhauser J."/>
            <person name="Jia X."/>
            <person name="Ren J."/>
            <person name="Beausoleil S.A."/>
            <person name="Silva J.C."/>
            <person name="Vemulapalli V."/>
            <person name="Bedford M.T."/>
            <person name="Comb M.J."/>
        </authorList>
    </citation>
    <scope>METHYLATION [LARGE SCALE ANALYSIS] AT ARG-467 (ISOFORM 6)</scope>
    <scope>IDENTIFICATION BY MASS SPECTROMETRY [LARGE SCALE ANALYSIS]</scope>
    <source>
        <tissue>Colon carcinoma</tissue>
    </source>
</reference>
<reference key="27">
    <citation type="journal article" date="2001" name="Science">
        <title>Structural basis for recognition of the intron branch site RNA by splicing factor 1.</title>
        <authorList>
            <person name="Liu Z."/>
            <person name="Luyten I."/>
            <person name="Bottomley M.J."/>
            <person name="Messias A.C."/>
            <person name="Houngninou-Molango S."/>
            <person name="Sprangers R."/>
            <person name="Zanier K."/>
            <person name="Kraemer A."/>
            <person name="Sattler M."/>
        </authorList>
    </citation>
    <scope>STRUCTURE BY NMR OF 133-255 IN COMPLEX WITH THE BRANCH SITE SEQUENCE 5'-UAUACUAACAA-3'</scope>
    <scope>MUTAGENESIS OF ASN-151; ARG-160; LYS-184; LEU-244; LEU-247; LEU-254 AND ARG-255</scope>
</reference>
<reference key="28">
    <citation type="journal article" date="2003" name="Mol. Cell">
        <title>Structural basis for the molecular recognition between human splicing factors U2AF65 and SF1/mBBP.</title>
        <authorList>
            <person name="Selenko P."/>
            <person name="Gregorovic G."/>
            <person name="Sprangers R."/>
            <person name="Stier G."/>
            <person name="Rhani Z."/>
            <person name="Kraemer A."/>
            <person name="Sattler M."/>
        </authorList>
    </citation>
    <scope>STRUCTURE BY NMR OF 13-25 IN COMPLEX WITH U2AF2</scope>
    <scope>MUTAGENESIS OF 16-LYS--ARG-18; 17-LYS-LYS-18; ARG-21 AND TRP-22</scope>
</reference>
<keyword id="KW-0002">3D-structure</keyword>
<keyword id="KW-0007">Acetylation</keyword>
<keyword id="KW-0025">Alternative splicing</keyword>
<keyword id="KW-0903">Direct protein sequencing</keyword>
<keyword id="KW-0479">Metal-binding</keyword>
<keyword id="KW-0488">Methylation</keyword>
<keyword id="KW-0507">mRNA processing</keyword>
<keyword id="KW-0508">mRNA splicing</keyword>
<keyword id="KW-0539">Nucleus</keyword>
<keyword id="KW-0597">Phosphoprotein</keyword>
<keyword id="KW-1267">Proteomics identification</keyword>
<keyword id="KW-1185">Reference proteome</keyword>
<keyword id="KW-0678">Repressor</keyword>
<keyword id="KW-0694">RNA-binding</keyword>
<keyword id="KW-0747">Spliceosome</keyword>
<keyword id="KW-0804">Transcription</keyword>
<keyword id="KW-0805">Transcription regulation</keyword>
<keyword id="KW-0862">Zinc</keyword>
<keyword id="KW-0863">Zinc-finger</keyword>
<dbReference type="EMBL" id="Y08765">
    <property type="protein sequence ID" value="CAA70018.1"/>
    <property type="molecule type" value="mRNA"/>
</dbReference>
<dbReference type="EMBL" id="Y08766">
    <property type="protein sequence ID" value="CAA70019.1"/>
    <property type="molecule type" value="mRNA"/>
</dbReference>
<dbReference type="EMBL" id="L49345">
    <property type="protein sequence ID" value="AAB03514.1"/>
    <property type="molecule type" value="mRNA"/>
</dbReference>
<dbReference type="EMBL" id="L49380">
    <property type="protein sequence ID" value="AAB04033.1"/>
    <property type="molecule type" value="mRNA"/>
</dbReference>
<dbReference type="EMBL" id="D26120">
    <property type="protein sequence ID" value="BAA05116.1"/>
    <property type="molecule type" value="mRNA"/>
</dbReference>
<dbReference type="EMBL" id="D26120">
    <property type="protein sequence ID" value="BAA05117.1"/>
    <property type="molecule type" value="mRNA"/>
</dbReference>
<dbReference type="EMBL" id="AK293753">
    <property type="protein sequence ID" value="BAH11587.1"/>
    <property type="molecule type" value="mRNA"/>
</dbReference>
<dbReference type="EMBL" id="AP001462">
    <property type="status" value="NOT_ANNOTATED_CDS"/>
    <property type="molecule type" value="Genomic_DNA"/>
</dbReference>
<dbReference type="EMBL" id="BC000773">
    <property type="protein sequence ID" value="AAH00773.1"/>
    <property type="status" value="ALT_INIT"/>
    <property type="molecule type" value="mRNA"/>
</dbReference>
<dbReference type="EMBL" id="BC008080">
    <property type="protein sequence ID" value="AAH08080.1"/>
    <property type="molecule type" value="mRNA"/>
</dbReference>
<dbReference type="EMBL" id="BC008724">
    <property type="protein sequence ID" value="AAH08724.1"/>
    <property type="molecule type" value="mRNA"/>
</dbReference>
<dbReference type="EMBL" id="BC011657">
    <property type="status" value="NOT_ANNOTATED_CDS"/>
    <property type="molecule type" value="mRNA"/>
</dbReference>
<dbReference type="EMBL" id="BC020217">
    <property type="protein sequence ID" value="AAH20217.1"/>
    <property type="molecule type" value="mRNA"/>
</dbReference>
<dbReference type="EMBL" id="BC038446">
    <property type="protein sequence ID" value="AAH38446.1"/>
    <property type="molecule type" value="mRNA"/>
</dbReference>
<dbReference type="EMBL" id="AJ000051">
    <property type="protein sequence ID" value="CAA03883.1"/>
    <property type="molecule type" value="Genomic_DNA"/>
</dbReference>
<dbReference type="EMBL" id="AJ000052">
    <property type="protein sequence ID" value="CAA03883.1"/>
    <property type="status" value="JOINED"/>
    <property type="molecule type" value="Genomic_DNA"/>
</dbReference>
<dbReference type="CCDS" id="CCDS31599.1">
    <molecule id="Q15637-1"/>
</dbReference>
<dbReference type="CCDS" id="CCDS44642.2">
    <molecule id="Q15637-6"/>
</dbReference>
<dbReference type="CCDS" id="CCDS53660.1">
    <molecule id="Q15637-7"/>
</dbReference>
<dbReference type="CCDS" id="CCDS53661.1">
    <molecule id="Q15637-5"/>
</dbReference>
<dbReference type="CCDS" id="CCDS8080.1">
    <molecule id="Q15637-2"/>
</dbReference>
<dbReference type="CCDS" id="CCDS8081.1">
    <molecule id="Q15637-4"/>
</dbReference>
<dbReference type="PIR" id="G02919">
    <property type="entry name" value="G02919"/>
</dbReference>
<dbReference type="RefSeq" id="NP_001171501.1">
    <molecule id="Q15637-5"/>
    <property type="nucleotide sequence ID" value="NM_001178030.2"/>
</dbReference>
<dbReference type="RefSeq" id="NP_001171502.1">
    <molecule id="Q15637-7"/>
    <property type="nucleotide sequence ID" value="NM_001178031.3"/>
</dbReference>
<dbReference type="RefSeq" id="NP_001333292.1">
    <property type="nucleotide sequence ID" value="NM_001346363.1"/>
</dbReference>
<dbReference type="RefSeq" id="NP_001333293.1">
    <property type="nucleotide sequence ID" value="NM_001346364.1"/>
</dbReference>
<dbReference type="RefSeq" id="NP_004621.2">
    <molecule id="Q15637-1"/>
    <property type="nucleotide sequence ID" value="NM_004630.3"/>
</dbReference>
<dbReference type="RefSeq" id="NP_973724.1">
    <molecule id="Q15637-2"/>
    <property type="nucleotide sequence ID" value="NM_201995.3"/>
</dbReference>
<dbReference type="RefSeq" id="NP_973726.2">
    <molecule id="Q15637-6"/>
    <property type="nucleotide sequence ID" value="NM_201997.3"/>
</dbReference>
<dbReference type="RefSeq" id="NP_973727.1">
    <molecule id="Q15637-4"/>
    <property type="nucleotide sequence ID" value="NM_201998.3"/>
</dbReference>
<dbReference type="RefSeq" id="XP_016873733.1">
    <property type="nucleotide sequence ID" value="XM_017018244.1"/>
</dbReference>
<dbReference type="PDB" id="1K1G">
    <property type="method" value="NMR"/>
    <property type="chains" value="A=133-260"/>
</dbReference>
<dbReference type="PDB" id="1O0P">
    <property type="method" value="NMR"/>
    <property type="chains" value="B=13-25"/>
</dbReference>
<dbReference type="PDB" id="1OPI">
    <property type="method" value="NMR"/>
    <property type="chains" value="B=13-25"/>
</dbReference>
<dbReference type="PDB" id="2M09">
    <property type="method" value="NMR"/>
    <property type="chains" value="A=27-145"/>
</dbReference>
<dbReference type="PDB" id="2M0G">
    <property type="method" value="NMR"/>
    <property type="chains" value="A=1-145"/>
</dbReference>
<dbReference type="PDB" id="4FXW">
    <property type="method" value="X-ray"/>
    <property type="resolution" value="2.29 A"/>
    <property type="chains" value="B/D=14-132"/>
</dbReference>
<dbReference type="PDB" id="4FXX">
    <property type="method" value="X-ray"/>
    <property type="resolution" value="2.48 A"/>
    <property type="chains" value="A/B/C/D=26-132"/>
</dbReference>
<dbReference type="PDB" id="7VH9">
    <property type="method" value="NMR"/>
    <property type="chains" value="A=296-327"/>
</dbReference>
<dbReference type="PDB" id="7VPX">
    <property type="method" value="EM"/>
    <property type="resolution" value="3.00 A"/>
    <property type="chains" value="D=1-639"/>
</dbReference>
<dbReference type="PDB" id="8PXX">
    <property type="method" value="NMR"/>
    <property type="chains" value="B=575-590"/>
</dbReference>
<dbReference type="PDBsum" id="1K1G"/>
<dbReference type="PDBsum" id="1O0P"/>
<dbReference type="PDBsum" id="1OPI"/>
<dbReference type="PDBsum" id="2M09"/>
<dbReference type="PDBsum" id="2M0G"/>
<dbReference type="PDBsum" id="4FXW"/>
<dbReference type="PDBsum" id="4FXX"/>
<dbReference type="PDBsum" id="7VH9"/>
<dbReference type="PDBsum" id="7VPX"/>
<dbReference type="PDBsum" id="8PXX"/>
<dbReference type="BMRB" id="Q15637"/>
<dbReference type="EMDB" id="EMD-32074"/>
<dbReference type="SASBDB" id="Q15637"/>
<dbReference type="SMR" id="Q15637"/>
<dbReference type="BioGRID" id="113368">
    <property type="interactions" value="345"/>
</dbReference>
<dbReference type="ComplexPortal" id="CPX-1074">
    <property type="entry name" value="SF1-U2AF65 splicing factor complex"/>
</dbReference>
<dbReference type="CORUM" id="Q15637"/>
<dbReference type="DIP" id="DIP-29410N"/>
<dbReference type="ELM" id="Q15637"/>
<dbReference type="FunCoup" id="Q15637">
    <property type="interactions" value="4296"/>
</dbReference>
<dbReference type="IntAct" id="Q15637">
    <property type="interactions" value="239"/>
</dbReference>
<dbReference type="MINT" id="Q15637"/>
<dbReference type="STRING" id="9606.ENSP00000366604"/>
<dbReference type="DrugBank" id="DB11638">
    <property type="generic name" value="Artenimol"/>
</dbReference>
<dbReference type="MoonDB" id="Q15637">
    <property type="type" value="Predicted"/>
</dbReference>
<dbReference type="GlyCosmos" id="Q15637">
    <property type="glycosylation" value="9 sites, 2 glycans"/>
</dbReference>
<dbReference type="GlyGen" id="Q15637">
    <property type="glycosylation" value="10 sites, 2 O-linked glycans (10 sites)"/>
</dbReference>
<dbReference type="iPTMnet" id="Q15637"/>
<dbReference type="MetOSite" id="Q15637"/>
<dbReference type="PhosphoSitePlus" id="Q15637"/>
<dbReference type="SwissPalm" id="Q15637"/>
<dbReference type="BioMuta" id="SF1"/>
<dbReference type="DMDM" id="38258418"/>
<dbReference type="jPOST" id="Q15637"/>
<dbReference type="MassIVE" id="Q15637"/>
<dbReference type="PaxDb" id="9606-ENSP00000366604"/>
<dbReference type="PeptideAtlas" id="Q15637"/>
<dbReference type="ProteomicsDB" id="10457"/>
<dbReference type="ProteomicsDB" id="60669">
    <molecule id="Q15637-1"/>
</dbReference>
<dbReference type="ProteomicsDB" id="60670">
    <molecule id="Q15637-2"/>
</dbReference>
<dbReference type="ProteomicsDB" id="60671">
    <molecule id="Q15637-3"/>
</dbReference>
<dbReference type="ProteomicsDB" id="60672">
    <molecule id="Q15637-4"/>
</dbReference>
<dbReference type="ProteomicsDB" id="60673">
    <molecule id="Q15637-5"/>
</dbReference>
<dbReference type="ProteomicsDB" id="60674">
    <molecule id="Q15637-6"/>
</dbReference>
<dbReference type="Pumba" id="Q15637"/>
<dbReference type="TopDownProteomics" id="Q15637-4">
    <molecule id="Q15637-4"/>
</dbReference>
<dbReference type="Antibodypedia" id="15586">
    <property type="antibodies" value="421 antibodies from 32 providers"/>
</dbReference>
<dbReference type="DNASU" id="7536"/>
<dbReference type="Ensembl" id="ENST00000227503.13">
    <molecule id="Q15637-4"/>
    <property type="protein sequence ID" value="ENSP00000227503.9"/>
    <property type="gene ID" value="ENSG00000168066.22"/>
</dbReference>
<dbReference type="Ensembl" id="ENST00000334944.9">
    <molecule id="Q15637-2"/>
    <property type="protein sequence ID" value="ENSP00000334414.5"/>
    <property type="gene ID" value="ENSG00000168066.22"/>
</dbReference>
<dbReference type="Ensembl" id="ENST00000377387.5">
    <molecule id="Q15637-5"/>
    <property type="protein sequence ID" value="ENSP00000366604.1"/>
    <property type="gene ID" value="ENSG00000168066.22"/>
</dbReference>
<dbReference type="Ensembl" id="ENST00000377390.8">
    <molecule id="Q15637-1"/>
    <property type="protein sequence ID" value="ENSP00000366607.3"/>
    <property type="gene ID" value="ENSG00000168066.22"/>
</dbReference>
<dbReference type="Ensembl" id="ENST00000377394.7">
    <molecule id="Q15637-6"/>
    <property type="protein sequence ID" value="ENSP00000366611.3"/>
    <property type="gene ID" value="ENSG00000168066.22"/>
</dbReference>
<dbReference type="Ensembl" id="ENST00000433274.6">
    <molecule id="Q15637-7"/>
    <property type="protein sequence ID" value="ENSP00000396793.2"/>
    <property type="gene ID" value="ENSG00000168066.22"/>
</dbReference>
<dbReference type="GeneID" id="7536"/>
<dbReference type="KEGG" id="hsa:7536"/>
<dbReference type="MANE-Select" id="ENST00000377390.8">
    <property type="protein sequence ID" value="ENSP00000366607.3"/>
    <property type="RefSeq nucleotide sequence ID" value="NM_004630.4"/>
    <property type="RefSeq protein sequence ID" value="NP_004621.2"/>
</dbReference>
<dbReference type="UCSC" id="uc001oaz.3">
    <molecule id="Q15637-1"/>
    <property type="organism name" value="human"/>
</dbReference>
<dbReference type="AGR" id="HGNC:12950"/>
<dbReference type="CTD" id="7536"/>
<dbReference type="DisGeNET" id="7536"/>
<dbReference type="GeneCards" id="SF1"/>
<dbReference type="HGNC" id="HGNC:12950">
    <property type="gene designation" value="SF1"/>
</dbReference>
<dbReference type="HPA" id="ENSG00000168066">
    <property type="expression patterns" value="Low tissue specificity"/>
</dbReference>
<dbReference type="MalaCards" id="SF1"/>
<dbReference type="MIM" id="601516">
    <property type="type" value="gene"/>
</dbReference>
<dbReference type="neXtProt" id="NX_Q15637"/>
<dbReference type="OpenTargets" id="ENSG00000168066"/>
<dbReference type="PharmGKB" id="PA37533"/>
<dbReference type="VEuPathDB" id="HostDB:ENSG00000168066"/>
<dbReference type="eggNOG" id="KOG0119">
    <property type="taxonomic scope" value="Eukaryota"/>
</dbReference>
<dbReference type="GeneTree" id="ENSGT00940000157258"/>
<dbReference type="HOGENOM" id="CLU_016864_5_0_1"/>
<dbReference type="InParanoid" id="Q15637"/>
<dbReference type="OMA" id="EDSNCKI"/>
<dbReference type="OrthoDB" id="10021397at2759"/>
<dbReference type="PAN-GO" id="Q15637">
    <property type="GO annotations" value="3 GO annotations based on evolutionary models"/>
</dbReference>
<dbReference type="PhylomeDB" id="Q15637"/>
<dbReference type="TreeFam" id="TF319159"/>
<dbReference type="PathwayCommons" id="Q15637"/>
<dbReference type="Reactome" id="R-HSA-72163">
    <property type="pathway name" value="mRNA Splicing - Major Pathway"/>
</dbReference>
<dbReference type="SignaLink" id="Q15637"/>
<dbReference type="SIGNOR" id="Q15637"/>
<dbReference type="BioGRID-ORCS" id="7536">
    <property type="hits" value="856 hits in 1181 CRISPR screens"/>
</dbReference>
<dbReference type="CD-CODE" id="804901D1">
    <property type="entry name" value="Nuclear speckle"/>
</dbReference>
<dbReference type="CD-CODE" id="DEE660B4">
    <property type="entry name" value="Stress granule"/>
</dbReference>
<dbReference type="ChiTaRS" id="SF1">
    <property type="organism name" value="human"/>
</dbReference>
<dbReference type="EvolutionaryTrace" id="Q15637"/>
<dbReference type="GeneWiki" id="SF1_(gene)"/>
<dbReference type="GenomeRNAi" id="7536"/>
<dbReference type="Pharos" id="Q15637">
    <property type="development level" value="Tbio"/>
</dbReference>
<dbReference type="PRO" id="PR:Q15637"/>
<dbReference type="Proteomes" id="UP000005640">
    <property type="component" value="Chromosome 11"/>
</dbReference>
<dbReference type="RNAct" id="Q15637">
    <property type="molecule type" value="protein"/>
</dbReference>
<dbReference type="Bgee" id="ENSG00000168066">
    <property type="expression patterns" value="Expressed in right uterine tube and 212 other cell types or tissues"/>
</dbReference>
<dbReference type="ExpressionAtlas" id="Q15637">
    <property type="expression patterns" value="baseline and differential"/>
</dbReference>
<dbReference type="GO" id="GO:0005654">
    <property type="term" value="C:nucleoplasm"/>
    <property type="evidence" value="ECO:0000314"/>
    <property type="project" value="HPA"/>
</dbReference>
<dbReference type="GO" id="GO:0005634">
    <property type="term" value="C:nucleus"/>
    <property type="evidence" value="ECO:0000318"/>
    <property type="project" value="GO_Central"/>
</dbReference>
<dbReference type="GO" id="GO:0005840">
    <property type="term" value="C:ribosome"/>
    <property type="evidence" value="ECO:0000303"/>
    <property type="project" value="UniProtKB"/>
</dbReference>
<dbReference type="GO" id="GO:0005681">
    <property type="term" value="C:spliceosomal complex"/>
    <property type="evidence" value="ECO:0000314"/>
    <property type="project" value="HGNC-UCL"/>
</dbReference>
<dbReference type="GO" id="GO:0089701">
    <property type="term" value="C:U2AF complex"/>
    <property type="evidence" value="ECO:0000353"/>
    <property type="project" value="ComplexPortal"/>
</dbReference>
<dbReference type="GO" id="GO:0042802">
    <property type="term" value="F:identical protein binding"/>
    <property type="evidence" value="ECO:0000353"/>
    <property type="project" value="IntAct"/>
</dbReference>
<dbReference type="GO" id="GO:0003729">
    <property type="term" value="F:mRNA binding"/>
    <property type="evidence" value="ECO:0000318"/>
    <property type="project" value="GO_Central"/>
</dbReference>
<dbReference type="GO" id="GO:0003723">
    <property type="term" value="F:RNA binding"/>
    <property type="evidence" value="ECO:0007005"/>
    <property type="project" value="UniProtKB"/>
</dbReference>
<dbReference type="GO" id="GO:0003714">
    <property type="term" value="F:transcription corepressor activity"/>
    <property type="evidence" value="ECO:0000304"/>
    <property type="project" value="ProtInc"/>
</dbReference>
<dbReference type="GO" id="GO:0008270">
    <property type="term" value="F:zinc ion binding"/>
    <property type="evidence" value="ECO:0007669"/>
    <property type="project" value="UniProtKB-KW"/>
</dbReference>
<dbReference type="GO" id="GO:0000389">
    <property type="term" value="P:mRNA 3'-splice site recognition"/>
    <property type="evidence" value="ECO:0000304"/>
    <property type="project" value="HGNC-UCL"/>
</dbReference>
<dbReference type="GO" id="GO:0000398">
    <property type="term" value="P:mRNA splicing, via spliceosome"/>
    <property type="evidence" value="ECO:0000303"/>
    <property type="project" value="ComplexPortal"/>
</dbReference>
<dbReference type="GO" id="GO:0048662">
    <property type="term" value="P:negative regulation of smooth muscle cell proliferation"/>
    <property type="evidence" value="ECO:0007669"/>
    <property type="project" value="Ensembl"/>
</dbReference>
<dbReference type="GO" id="GO:0048024">
    <property type="term" value="P:regulation of mRNA splicing, via spliceosome"/>
    <property type="evidence" value="ECO:0000318"/>
    <property type="project" value="GO_Central"/>
</dbReference>
<dbReference type="GO" id="GO:0000245">
    <property type="term" value="P:spliceosomal complex assembly"/>
    <property type="evidence" value="ECO:0000303"/>
    <property type="project" value="UniProtKB"/>
</dbReference>
<dbReference type="CDD" id="cd22382">
    <property type="entry name" value="KH-I_SF1"/>
    <property type="match status" value="1"/>
</dbReference>
<dbReference type="DisProt" id="DP01449"/>
<dbReference type="FunFam" id="3.30.1370.10:FF:000016">
    <property type="entry name" value="Putative splicing factor 1"/>
    <property type="match status" value="1"/>
</dbReference>
<dbReference type="Gene3D" id="6.10.140.1790">
    <property type="match status" value="1"/>
</dbReference>
<dbReference type="Gene3D" id="3.30.1370.10">
    <property type="entry name" value="K Homology domain, type 1"/>
    <property type="match status" value="1"/>
</dbReference>
<dbReference type="IDEAL" id="IID00247"/>
<dbReference type="InterPro" id="IPR045071">
    <property type="entry name" value="BBP-like"/>
</dbReference>
<dbReference type="InterPro" id="IPR055256">
    <property type="entry name" value="KH_1_KHDC4/BBP-like"/>
</dbReference>
<dbReference type="InterPro" id="IPR004087">
    <property type="entry name" value="KH_dom"/>
</dbReference>
<dbReference type="InterPro" id="IPR036612">
    <property type="entry name" value="KH_dom_type_1_sf"/>
</dbReference>
<dbReference type="InterPro" id="IPR032570">
    <property type="entry name" value="SF1-HH"/>
</dbReference>
<dbReference type="InterPro" id="IPR047086">
    <property type="entry name" value="SF1-HH_sf"/>
</dbReference>
<dbReference type="InterPro" id="IPR001878">
    <property type="entry name" value="Znf_CCHC"/>
</dbReference>
<dbReference type="PANTHER" id="PTHR11208">
    <property type="entry name" value="RNA-BINDING PROTEIN RELATED"/>
    <property type="match status" value="1"/>
</dbReference>
<dbReference type="PANTHER" id="PTHR11208:SF45">
    <property type="entry name" value="SPLICING FACTOR 1"/>
    <property type="match status" value="1"/>
</dbReference>
<dbReference type="Pfam" id="PF22675">
    <property type="entry name" value="KH-I_KHDC4-BBP"/>
    <property type="match status" value="1"/>
</dbReference>
<dbReference type="Pfam" id="PF16275">
    <property type="entry name" value="SF1-HH"/>
    <property type="match status" value="1"/>
</dbReference>
<dbReference type="Pfam" id="PF00098">
    <property type="entry name" value="zf-CCHC"/>
    <property type="match status" value="1"/>
</dbReference>
<dbReference type="SMART" id="SM00322">
    <property type="entry name" value="KH"/>
    <property type="match status" value="1"/>
</dbReference>
<dbReference type="SMART" id="SM00343">
    <property type="entry name" value="ZnF_C2HC"/>
    <property type="match status" value="1"/>
</dbReference>
<dbReference type="SUPFAM" id="SSF54791">
    <property type="entry name" value="Eukaryotic type KH-domain (KH-domain type I)"/>
    <property type="match status" value="1"/>
</dbReference>
<dbReference type="PROSITE" id="PS50084">
    <property type="entry name" value="KH_TYPE_1"/>
    <property type="match status" value="1"/>
</dbReference>
<dbReference type="PROSITE" id="PS50158">
    <property type="entry name" value="ZF_CCHC"/>
    <property type="match status" value="1"/>
</dbReference>